<name>PEP6_ARATH</name>
<sequence>MEVNGEEERRSRREDEEKEDYYYSLLNSPCSVCNKFVQAILKCLGLESSSIPPSSSSSSPSLVEEEDSGTETVEETGFMARITAVLRRRPRPPPYSSGRPGQNN</sequence>
<reference key="1">
    <citation type="journal article" date="1999" name="Nature">
        <title>Sequence and analysis of chromosome 2 of the plant Arabidopsis thaliana.</title>
        <authorList>
            <person name="Lin X."/>
            <person name="Kaul S."/>
            <person name="Rounsley S.D."/>
            <person name="Shea T.P."/>
            <person name="Benito M.-I."/>
            <person name="Town C.D."/>
            <person name="Fujii C.Y."/>
            <person name="Mason T.M."/>
            <person name="Bowman C.L."/>
            <person name="Barnstead M.E."/>
            <person name="Feldblyum T.V."/>
            <person name="Buell C.R."/>
            <person name="Ketchum K.A."/>
            <person name="Lee J.J."/>
            <person name="Ronning C.M."/>
            <person name="Koo H.L."/>
            <person name="Moffat K.S."/>
            <person name="Cronin L.A."/>
            <person name="Shen M."/>
            <person name="Pai G."/>
            <person name="Van Aken S."/>
            <person name="Umayam L."/>
            <person name="Tallon L.J."/>
            <person name="Gill J.E."/>
            <person name="Adams M.D."/>
            <person name="Carrera A.J."/>
            <person name="Creasy T.H."/>
            <person name="Goodman H.M."/>
            <person name="Somerville C.R."/>
            <person name="Copenhaver G.P."/>
            <person name="Preuss D."/>
            <person name="Nierman W.C."/>
            <person name="White O."/>
            <person name="Eisen J.A."/>
            <person name="Salzberg S.L."/>
            <person name="Fraser C.M."/>
            <person name="Venter J.C."/>
        </authorList>
    </citation>
    <scope>NUCLEOTIDE SEQUENCE [LARGE SCALE GENOMIC DNA]</scope>
    <source>
        <strain>cv. Columbia</strain>
    </source>
</reference>
<reference key="2">
    <citation type="journal article" date="2017" name="Plant J.">
        <title>Araport11: a complete reannotation of the Arabidopsis thaliana reference genome.</title>
        <authorList>
            <person name="Cheng C.Y."/>
            <person name="Krishnakumar V."/>
            <person name="Chan A.P."/>
            <person name="Thibaud-Nissen F."/>
            <person name="Schobel S."/>
            <person name="Town C.D."/>
        </authorList>
    </citation>
    <scope>GENOME REANNOTATION</scope>
    <source>
        <strain>cv. Columbia</strain>
    </source>
</reference>
<reference key="3">
    <citation type="submission" date="2006-03" db="EMBL/GenBank/DDBJ databases">
        <title>Arabidopsis ORF clones.</title>
        <authorList>
            <person name="Shinn P."/>
            <person name="Chen H."/>
            <person name="Kim C.J."/>
            <person name="Ecker J.R."/>
        </authorList>
    </citation>
    <scope>NUCLEOTIDE SEQUENCE [LARGE SCALE MRNA]</scope>
    <source>
        <strain>cv. Columbia</strain>
    </source>
</reference>
<reference key="4">
    <citation type="journal article" date="2006" name="Proc. Natl. Acad. Sci. U.S.A.">
        <title>An endogenous peptide signal in Arabidopsis activates components of the innate immune response.</title>
        <authorList>
            <person name="Huffaker A."/>
            <person name="Pearce G."/>
            <person name="Ryan C.A."/>
        </authorList>
    </citation>
    <scope>GENE FAMILY</scope>
    <scope>NOMENCLATURE</scope>
</reference>
<comment type="function">
    <text evidence="1">Elicitor of plant defense.</text>
</comment>
<comment type="similarity">
    <text evidence="3">Belongs to the brassicaceae elicitor peptide family.</text>
</comment>
<accession>Q9SIZ9</accession>
<evidence type="ECO:0000250" key="1"/>
<evidence type="ECO:0000256" key="2">
    <source>
        <dbReference type="SAM" id="MobiDB-lite"/>
    </source>
</evidence>
<evidence type="ECO:0000305" key="3"/>
<gene>
    <name type="primary">PEP6</name>
    <name type="synonym">PROPEP6</name>
    <name type="ordered locus">At2g22000</name>
    <name type="ORF">F7D8.32</name>
</gene>
<dbReference type="EMBL" id="AC007019">
    <property type="protein sequence ID" value="AAD20417.1"/>
    <property type="molecule type" value="Genomic_DNA"/>
</dbReference>
<dbReference type="EMBL" id="CP002685">
    <property type="protein sequence ID" value="AEC07250.1"/>
    <property type="molecule type" value="Genomic_DNA"/>
</dbReference>
<dbReference type="EMBL" id="BT021966">
    <property type="protein sequence ID" value="AAY17403.1"/>
    <property type="molecule type" value="mRNA"/>
</dbReference>
<dbReference type="EMBL" id="BT024750">
    <property type="protein sequence ID" value="ABD59088.1"/>
    <property type="molecule type" value="mRNA"/>
</dbReference>
<dbReference type="PIR" id="G84607">
    <property type="entry name" value="G84607"/>
</dbReference>
<dbReference type="RefSeq" id="NP_179791.1">
    <property type="nucleotide sequence ID" value="NM_127769.3"/>
</dbReference>
<dbReference type="FunCoup" id="Q9SIZ9">
    <property type="interactions" value="7"/>
</dbReference>
<dbReference type="STRING" id="3702.Q9SIZ9"/>
<dbReference type="PaxDb" id="3702-AT2G22000.1"/>
<dbReference type="ProteomicsDB" id="236292"/>
<dbReference type="EnsemblPlants" id="AT2G22000.1">
    <property type="protein sequence ID" value="AT2G22000.1"/>
    <property type="gene ID" value="AT2G22000"/>
</dbReference>
<dbReference type="GeneID" id="816736"/>
<dbReference type="Gramene" id="AT2G22000.1">
    <property type="protein sequence ID" value="AT2G22000.1"/>
    <property type="gene ID" value="AT2G22000"/>
</dbReference>
<dbReference type="KEGG" id="ath:AT2G22000"/>
<dbReference type="Araport" id="AT2G22000"/>
<dbReference type="TAIR" id="AT2G22000">
    <property type="gene designation" value="PROPEP6"/>
</dbReference>
<dbReference type="HOGENOM" id="CLU_2375752_0_0_1"/>
<dbReference type="InParanoid" id="Q9SIZ9"/>
<dbReference type="OMA" id="VEETGFM"/>
<dbReference type="PRO" id="PR:Q9SIZ9"/>
<dbReference type="Proteomes" id="UP000006548">
    <property type="component" value="Chromosome 2"/>
</dbReference>
<dbReference type="ExpressionAtlas" id="Q9SIZ9">
    <property type="expression patterns" value="baseline and differential"/>
</dbReference>
<dbReference type="GO" id="GO:0045087">
    <property type="term" value="P:innate immune response"/>
    <property type="evidence" value="ECO:0007669"/>
    <property type="project" value="InterPro"/>
</dbReference>
<dbReference type="InterPro" id="IPR035176">
    <property type="entry name" value="PEP"/>
</dbReference>
<dbReference type="Pfam" id="PF17232">
    <property type="entry name" value="Pep1_7"/>
    <property type="match status" value="1"/>
</dbReference>
<feature type="propeptide" id="PRO_0000249089">
    <location>
        <begin position="1"/>
        <end position="81"/>
    </location>
</feature>
<feature type="peptide" id="PRO_0000249090" description="Elicitor peptide 6">
    <location>
        <begin position="82"/>
        <end position="104"/>
    </location>
</feature>
<feature type="region of interest" description="Disordered" evidence="2">
    <location>
        <begin position="48"/>
        <end position="104"/>
    </location>
</feature>
<feature type="compositionally biased region" description="Low complexity" evidence="2">
    <location>
        <begin position="48"/>
        <end position="61"/>
    </location>
</feature>
<feature type="compositionally biased region" description="Acidic residues" evidence="2">
    <location>
        <begin position="63"/>
        <end position="74"/>
    </location>
</feature>
<feature type="site" description="Required for ligand-receptor interaction" evidence="1">
    <location>
        <position position="98"/>
    </location>
</feature>
<protein>
    <recommendedName>
        <fullName>Elicitor peptide 6</fullName>
    </recommendedName>
</protein>
<keyword id="KW-0611">Plant defense</keyword>
<keyword id="KW-1185">Reference proteome</keyword>
<proteinExistence type="inferred from homology"/>
<organism>
    <name type="scientific">Arabidopsis thaliana</name>
    <name type="common">Mouse-ear cress</name>
    <dbReference type="NCBI Taxonomy" id="3702"/>
    <lineage>
        <taxon>Eukaryota</taxon>
        <taxon>Viridiplantae</taxon>
        <taxon>Streptophyta</taxon>
        <taxon>Embryophyta</taxon>
        <taxon>Tracheophyta</taxon>
        <taxon>Spermatophyta</taxon>
        <taxon>Magnoliopsida</taxon>
        <taxon>eudicotyledons</taxon>
        <taxon>Gunneridae</taxon>
        <taxon>Pentapetalae</taxon>
        <taxon>rosids</taxon>
        <taxon>malvids</taxon>
        <taxon>Brassicales</taxon>
        <taxon>Brassicaceae</taxon>
        <taxon>Camelineae</taxon>
        <taxon>Arabidopsis</taxon>
    </lineage>
</organism>